<comment type="function">
    <text evidence="1">May act as a substrate-specific adapter of an E3 ubiquitin-protein ligase complex (CUL3-RBX1-BTB) which mediates the ubiquitination and subsequent proteasomal degradation of target proteins.</text>
</comment>
<comment type="pathway">
    <text>Protein modification; protein ubiquitination.</text>
</comment>
<comment type="domain">
    <text evidence="6">The BTB/POZ domain mediates the interaction with some component of ubiquitin ligase complexes.</text>
</comment>
<comment type="similarity">
    <text evidence="4">Belongs to the NPH3 family.</text>
</comment>
<proteinExistence type="evidence at transcript level"/>
<feature type="chain" id="PRO_0000409585" description="BTB/POZ domain-containing protein At5g47800">
    <location>
        <begin position="1"/>
        <end position="559"/>
    </location>
</feature>
<feature type="domain" description="BTB" evidence="3">
    <location>
        <begin position="28"/>
        <end position="96"/>
    </location>
</feature>
<feature type="domain" description="NPH3" evidence="4">
    <location>
        <begin position="199"/>
        <end position="476"/>
    </location>
</feature>
<feature type="region of interest" description="Disordered" evidence="5">
    <location>
        <begin position="477"/>
        <end position="502"/>
    </location>
</feature>
<feature type="region of interest" description="Disordered" evidence="5">
    <location>
        <begin position="524"/>
        <end position="559"/>
    </location>
</feature>
<feature type="compositionally biased region" description="Low complexity" evidence="5">
    <location>
        <begin position="477"/>
        <end position="489"/>
    </location>
</feature>
<feature type="compositionally biased region" description="Basic and acidic residues" evidence="5">
    <location>
        <begin position="492"/>
        <end position="502"/>
    </location>
</feature>
<feature type="compositionally biased region" description="Basic and acidic residues" evidence="5">
    <location>
        <begin position="524"/>
        <end position="541"/>
    </location>
</feature>
<feature type="modified residue" description="Phosphotyrosine" evidence="2">
    <location>
        <position position="417"/>
    </location>
</feature>
<accession>Q9FIK1</accession>
<reference key="1">
    <citation type="journal article" date="1998" name="DNA Res.">
        <title>Structural analysis of Arabidopsis thaliana chromosome 5. VIII. Sequence features of the regions of 1,081,958 bp covered by seventeen physically assigned P1 and TAC clones.</title>
        <authorList>
            <person name="Asamizu E."/>
            <person name="Sato S."/>
            <person name="Kaneko T."/>
            <person name="Nakamura Y."/>
            <person name="Kotani H."/>
            <person name="Miyajima N."/>
            <person name="Tabata S."/>
        </authorList>
    </citation>
    <scope>NUCLEOTIDE SEQUENCE [LARGE SCALE GENOMIC DNA]</scope>
    <source>
        <strain>cv. Columbia</strain>
    </source>
</reference>
<reference key="2">
    <citation type="journal article" date="2017" name="Plant J.">
        <title>Araport11: a complete reannotation of the Arabidopsis thaliana reference genome.</title>
        <authorList>
            <person name="Cheng C.Y."/>
            <person name="Krishnakumar V."/>
            <person name="Chan A.P."/>
            <person name="Thibaud-Nissen F."/>
            <person name="Schobel S."/>
            <person name="Town C.D."/>
        </authorList>
    </citation>
    <scope>GENOME REANNOTATION</scope>
    <source>
        <strain>cv. Columbia</strain>
    </source>
</reference>
<reference key="3">
    <citation type="journal article" date="2003" name="Science">
        <title>Empirical analysis of transcriptional activity in the Arabidopsis genome.</title>
        <authorList>
            <person name="Yamada K."/>
            <person name="Lim J."/>
            <person name="Dale J.M."/>
            <person name="Chen H."/>
            <person name="Shinn P."/>
            <person name="Palm C.J."/>
            <person name="Southwick A.M."/>
            <person name="Wu H.C."/>
            <person name="Kim C.J."/>
            <person name="Nguyen M."/>
            <person name="Pham P.K."/>
            <person name="Cheuk R.F."/>
            <person name="Karlin-Newmann G."/>
            <person name="Liu S.X."/>
            <person name="Lam B."/>
            <person name="Sakano H."/>
            <person name="Wu T."/>
            <person name="Yu G."/>
            <person name="Miranda M."/>
            <person name="Quach H.L."/>
            <person name="Tripp M."/>
            <person name="Chang C.H."/>
            <person name="Lee J.M."/>
            <person name="Toriumi M.J."/>
            <person name="Chan M.M."/>
            <person name="Tang C.C."/>
            <person name="Onodera C.S."/>
            <person name="Deng J.M."/>
            <person name="Akiyama K."/>
            <person name="Ansari Y."/>
            <person name="Arakawa T."/>
            <person name="Banh J."/>
            <person name="Banno F."/>
            <person name="Bowser L."/>
            <person name="Brooks S.Y."/>
            <person name="Carninci P."/>
            <person name="Chao Q."/>
            <person name="Choy N."/>
            <person name="Enju A."/>
            <person name="Goldsmith A.D."/>
            <person name="Gurjal M."/>
            <person name="Hansen N.F."/>
            <person name="Hayashizaki Y."/>
            <person name="Johnson-Hopson C."/>
            <person name="Hsuan V.W."/>
            <person name="Iida K."/>
            <person name="Karnes M."/>
            <person name="Khan S."/>
            <person name="Koesema E."/>
            <person name="Ishida J."/>
            <person name="Jiang P.X."/>
            <person name="Jones T."/>
            <person name="Kawai J."/>
            <person name="Kamiya A."/>
            <person name="Meyers C."/>
            <person name="Nakajima M."/>
            <person name="Narusaka M."/>
            <person name="Seki M."/>
            <person name="Sakurai T."/>
            <person name="Satou M."/>
            <person name="Tamse R."/>
            <person name="Vaysberg M."/>
            <person name="Wallender E.K."/>
            <person name="Wong C."/>
            <person name="Yamamura Y."/>
            <person name="Yuan S."/>
            <person name="Shinozaki K."/>
            <person name="Davis R.W."/>
            <person name="Theologis A."/>
            <person name="Ecker J.R."/>
        </authorList>
    </citation>
    <scope>NUCLEOTIDE SEQUENCE [LARGE SCALE MRNA]</scope>
    <source>
        <strain>cv. Columbia</strain>
    </source>
</reference>
<reference key="4">
    <citation type="submission" date="2006-07" db="EMBL/GenBank/DDBJ databases">
        <title>Large-scale analysis of RIKEN Arabidopsis full-length (RAFL) cDNAs.</title>
        <authorList>
            <person name="Totoki Y."/>
            <person name="Seki M."/>
            <person name="Ishida J."/>
            <person name="Nakajima M."/>
            <person name="Enju A."/>
            <person name="Kamiya A."/>
            <person name="Narusaka M."/>
            <person name="Shin-i T."/>
            <person name="Nakagawa M."/>
            <person name="Sakamoto N."/>
            <person name="Oishi K."/>
            <person name="Kohara Y."/>
            <person name="Kobayashi M."/>
            <person name="Toyoda A."/>
            <person name="Sakaki Y."/>
            <person name="Sakurai T."/>
            <person name="Iida K."/>
            <person name="Akiyama K."/>
            <person name="Satou M."/>
            <person name="Toyoda T."/>
            <person name="Konagaya A."/>
            <person name="Carninci P."/>
            <person name="Kawai J."/>
            <person name="Hayashizaki Y."/>
            <person name="Shinozaki K."/>
        </authorList>
    </citation>
    <scope>NUCLEOTIDE SEQUENCE [LARGE SCALE MRNA]</scope>
    <source>
        <strain>cv. Columbia</strain>
    </source>
</reference>
<reference key="5">
    <citation type="journal article" date="2005" name="J. Biol. Chem.">
        <title>Cullins 3a and 3b assemble with members of the broad complex/tramtrack/bric-a-brac (BTB) protein family to form essential ubiquitin-protein ligases (E3s) in Arabidopsis.</title>
        <authorList>
            <person name="Gingerich D.J."/>
            <person name="Gagne J.M."/>
            <person name="Salter D.W."/>
            <person name="Hellmann H."/>
            <person name="Estelle M."/>
            <person name="Ma L."/>
            <person name="Vierstra R.D."/>
        </authorList>
    </citation>
    <scope>DOMAIN BTB</scope>
</reference>
<protein>
    <recommendedName>
        <fullName>BTB/POZ domain-containing protein At5g47800</fullName>
    </recommendedName>
</protein>
<evidence type="ECO:0000250" key="1"/>
<evidence type="ECO:0000250" key="2">
    <source>
        <dbReference type="UniProtKB" id="Q9FMF5"/>
    </source>
</evidence>
<evidence type="ECO:0000255" key="3">
    <source>
        <dbReference type="PROSITE-ProRule" id="PRU00037"/>
    </source>
</evidence>
<evidence type="ECO:0000255" key="4">
    <source>
        <dbReference type="PROSITE-ProRule" id="PRU00982"/>
    </source>
</evidence>
<evidence type="ECO:0000256" key="5">
    <source>
        <dbReference type="SAM" id="MobiDB-lite"/>
    </source>
</evidence>
<evidence type="ECO:0000269" key="6">
    <source>
    </source>
</evidence>
<gene>
    <name type="ordered locus">At5g47800</name>
    <name type="ORF">MCA23.12</name>
</gene>
<sequence>MKFMKIGTKPDTFYTQEASRILITDTPNDLVIRINNTTYHLHRSCLVPKCGLLRRLCTDLEESDTVTIELNDIPGGADAFELCAKFCYDITINLSAHNLVNALCASKFLRMSDSVDKGNLLPKLEAFFHSCILQGWKDSIVTLQSTTKLPEWCENLGIVRKCIDSIVEKILTPTSEVSWSHTYTRPGYAKRQHHSVPRDWWTEDISDLDLDLFRCVITAARSTFTLPPQLIGEALHVYTCRWLPYFKSNSHSGFSVKENEAALERHRRLVNTVVNMIPADKGSVSEGFLLRLVSIASYVRASLTTKTELIRKSSLQLEEATLEDLLLPSHSSSHLHRYDTDLVATVLESFLMLWRRQSSAHLSSNNTQLLHSIRKVAKLIDSYLQAVAQDVHMPVSKFVSLSEAVPDIARQSHDRLYKAINIFLKVHPEISKEEKKRLCRSLDCQKLSAQVRAHAVKNERMPLRTVVQALFFDQESGSKGASSRSESQELFTRGKETPTDEHSMMHKLHLGPASTGKAKNVLEEGCKRGEEKTRSSTDPKKIVWKGTGSEHKHHISRDR</sequence>
<name>Y5780_ARATH</name>
<organism>
    <name type="scientific">Arabidopsis thaliana</name>
    <name type="common">Mouse-ear cress</name>
    <dbReference type="NCBI Taxonomy" id="3702"/>
    <lineage>
        <taxon>Eukaryota</taxon>
        <taxon>Viridiplantae</taxon>
        <taxon>Streptophyta</taxon>
        <taxon>Embryophyta</taxon>
        <taxon>Tracheophyta</taxon>
        <taxon>Spermatophyta</taxon>
        <taxon>Magnoliopsida</taxon>
        <taxon>eudicotyledons</taxon>
        <taxon>Gunneridae</taxon>
        <taxon>Pentapetalae</taxon>
        <taxon>rosids</taxon>
        <taxon>malvids</taxon>
        <taxon>Brassicales</taxon>
        <taxon>Brassicaceae</taxon>
        <taxon>Camelineae</taxon>
        <taxon>Arabidopsis</taxon>
    </lineage>
</organism>
<keyword id="KW-0597">Phosphoprotein</keyword>
<keyword id="KW-1185">Reference proteome</keyword>
<keyword id="KW-0833">Ubl conjugation pathway</keyword>
<dbReference type="EMBL" id="AB016886">
    <property type="protein sequence ID" value="BAB11327.1"/>
    <property type="molecule type" value="Genomic_DNA"/>
</dbReference>
<dbReference type="EMBL" id="CP002688">
    <property type="protein sequence ID" value="AED95573.1"/>
    <property type="molecule type" value="Genomic_DNA"/>
</dbReference>
<dbReference type="EMBL" id="CP002688">
    <property type="protein sequence ID" value="ANM68401.1"/>
    <property type="molecule type" value="Genomic_DNA"/>
</dbReference>
<dbReference type="EMBL" id="CP002688">
    <property type="protein sequence ID" value="ANM68402.1"/>
    <property type="molecule type" value="Genomic_DNA"/>
</dbReference>
<dbReference type="EMBL" id="BT005761">
    <property type="protein sequence ID" value="AAO64165.1"/>
    <property type="molecule type" value="mRNA"/>
</dbReference>
<dbReference type="EMBL" id="BT006083">
    <property type="protein sequence ID" value="AAP04068.1"/>
    <property type="molecule type" value="mRNA"/>
</dbReference>
<dbReference type="EMBL" id="AK228510">
    <property type="protein sequence ID" value="BAF00434.1"/>
    <property type="molecule type" value="mRNA"/>
</dbReference>
<dbReference type="RefSeq" id="NP_001318755.1">
    <property type="nucleotide sequence ID" value="NM_001344746.1"/>
</dbReference>
<dbReference type="RefSeq" id="NP_001330161.1">
    <property type="nucleotide sequence ID" value="NM_001344748.1"/>
</dbReference>
<dbReference type="RefSeq" id="NP_199591.1">
    <property type="nucleotide sequence ID" value="NM_124154.5"/>
</dbReference>
<dbReference type="SMR" id="Q9FIK1"/>
<dbReference type="BioGRID" id="20079">
    <property type="interactions" value="1"/>
</dbReference>
<dbReference type="FunCoup" id="Q9FIK1">
    <property type="interactions" value="20"/>
</dbReference>
<dbReference type="iPTMnet" id="Q9FIK1"/>
<dbReference type="PaxDb" id="3702-AT5G47800.1"/>
<dbReference type="EnsemblPlants" id="AT5G47800.1">
    <property type="protein sequence ID" value="AT5G47800.1"/>
    <property type="gene ID" value="AT5G47800"/>
</dbReference>
<dbReference type="EnsemblPlants" id="AT5G47800.3">
    <property type="protein sequence ID" value="AT5G47800.3"/>
    <property type="gene ID" value="AT5G47800"/>
</dbReference>
<dbReference type="EnsemblPlants" id="AT5G47800.4">
    <property type="protein sequence ID" value="AT5G47800.4"/>
    <property type="gene ID" value="AT5G47800"/>
</dbReference>
<dbReference type="GeneID" id="834831"/>
<dbReference type="Gramene" id="AT5G47800.1">
    <property type="protein sequence ID" value="AT5G47800.1"/>
    <property type="gene ID" value="AT5G47800"/>
</dbReference>
<dbReference type="Gramene" id="AT5G47800.3">
    <property type="protein sequence ID" value="AT5G47800.3"/>
    <property type="gene ID" value="AT5G47800"/>
</dbReference>
<dbReference type="Gramene" id="AT5G47800.4">
    <property type="protein sequence ID" value="AT5G47800.4"/>
    <property type="gene ID" value="AT5G47800"/>
</dbReference>
<dbReference type="KEGG" id="ath:AT5G47800"/>
<dbReference type="Araport" id="AT5G47800"/>
<dbReference type="TAIR" id="AT5G47800"/>
<dbReference type="eggNOG" id="ENOG502QQZH">
    <property type="taxonomic scope" value="Eukaryota"/>
</dbReference>
<dbReference type="HOGENOM" id="CLU_005994_5_2_1"/>
<dbReference type="InParanoid" id="Q9FIK1"/>
<dbReference type="OMA" id="FPLVPKC"/>
<dbReference type="PhylomeDB" id="Q9FIK1"/>
<dbReference type="UniPathway" id="UPA00143"/>
<dbReference type="PRO" id="PR:Q9FIK1"/>
<dbReference type="Proteomes" id="UP000006548">
    <property type="component" value="Chromosome 5"/>
</dbReference>
<dbReference type="ExpressionAtlas" id="Q9FIK1">
    <property type="expression patterns" value="baseline and differential"/>
</dbReference>
<dbReference type="GO" id="GO:0016567">
    <property type="term" value="P:protein ubiquitination"/>
    <property type="evidence" value="ECO:0007669"/>
    <property type="project" value="UniProtKB-UniPathway"/>
</dbReference>
<dbReference type="CDD" id="cd18312">
    <property type="entry name" value="BTB_POZ_NPY3-like"/>
    <property type="match status" value="1"/>
</dbReference>
<dbReference type="Gene3D" id="3.30.710.10">
    <property type="entry name" value="Potassium Channel Kv1.1, Chain A"/>
    <property type="match status" value="1"/>
</dbReference>
<dbReference type="InterPro" id="IPR000210">
    <property type="entry name" value="BTB/POZ_dom"/>
</dbReference>
<dbReference type="InterPro" id="IPR043454">
    <property type="entry name" value="NPH3/RPT2-like"/>
</dbReference>
<dbReference type="InterPro" id="IPR027356">
    <property type="entry name" value="NPH3_dom"/>
</dbReference>
<dbReference type="InterPro" id="IPR011333">
    <property type="entry name" value="SKP1/BTB/POZ_sf"/>
</dbReference>
<dbReference type="PANTHER" id="PTHR32370">
    <property type="entry name" value="OS12G0117600 PROTEIN"/>
    <property type="match status" value="1"/>
</dbReference>
<dbReference type="Pfam" id="PF00651">
    <property type="entry name" value="BTB"/>
    <property type="match status" value="1"/>
</dbReference>
<dbReference type="Pfam" id="PF03000">
    <property type="entry name" value="NPH3"/>
    <property type="match status" value="1"/>
</dbReference>
<dbReference type="SUPFAM" id="SSF54695">
    <property type="entry name" value="POZ domain"/>
    <property type="match status" value="1"/>
</dbReference>
<dbReference type="PROSITE" id="PS50097">
    <property type="entry name" value="BTB"/>
    <property type="match status" value="1"/>
</dbReference>
<dbReference type="PROSITE" id="PS51649">
    <property type="entry name" value="NPH3"/>
    <property type="match status" value="1"/>
</dbReference>